<gene>
    <name type="primary">rpl30e</name>
    <name type="ordered locus">MJ1044</name>
</gene>
<comment type="similarity">
    <text evidence="1">Belongs to the eukaryotic ribosomal protein eL30 family.</text>
</comment>
<organism>
    <name type="scientific">Methanocaldococcus jannaschii (strain ATCC 43067 / DSM 2661 / JAL-1 / JCM 10045 / NBRC 100440)</name>
    <name type="common">Methanococcus jannaschii</name>
    <dbReference type="NCBI Taxonomy" id="243232"/>
    <lineage>
        <taxon>Archaea</taxon>
        <taxon>Methanobacteriati</taxon>
        <taxon>Methanobacteriota</taxon>
        <taxon>Methanomada group</taxon>
        <taxon>Methanococci</taxon>
        <taxon>Methanococcales</taxon>
        <taxon>Methanocaldococcaceae</taxon>
        <taxon>Methanocaldococcus</taxon>
    </lineage>
</organism>
<keyword id="KW-0002">3D-structure</keyword>
<keyword id="KW-1185">Reference proteome</keyword>
<keyword id="KW-0687">Ribonucleoprotein</keyword>
<keyword id="KW-0689">Ribosomal protein</keyword>
<evidence type="ECO:0000305" key="1"/>
<evidence type="ECO:0007829" key="2">
    <source>
        <dbReference type="PDB" id="3CPQ"/>
    </source>
</evidence>
<proteinExistence type="evidence at protein level"/>
<name>RL30E_METJA</name>
<protein>
    <recommendedName>
        <fullName evidence="1">Large ribosomal subunit protein eL30</fullName>
    </recommendedName>
    <alternativeName>
        <fullName>50S ribosomal protein L30e</fullName>
    </alternativeName>
</protein>
<reference key="1">
    <citation type="journal article" date="1996" name="Science">
        <title>Complete genome sequence of the methanogenic archaeon, Methanococcus jannaschii.</title>
        <authorList>
            <person name="Bult C.J."/>
            <person name="White O."/>
            <person name="Olsen G.J."/>
            <person name="Zhou L."/>
            <person name="Fleischmann R.D."/>
            <person name="Sutton G.G."/>
            <person name="Blake J.A."/>
            <person name="FitzGerald L.M."/>
            <person name="Clayton R.A."/>
            <person name="Gocayne J.D."/>
            <person name="Kerlavage A.R."/>
            <person name="Dougherty B.A."/>
            <person name="Tomb J.-F."/>
            <person name="Adams M.D."/>
            <person name="Reich C.I."/>
            <person name="Overbeek R."/>
            <person name="Kirkness E.F."/>
            <person name="Weinstock K.G."/>
            <person name="Merrick J.M."/>
            <person name="Glodek A."/>
            <person name="Scott J.L."/>
            <person name="Geoghagen N.S.M."/>
            <person name="Weidman J.F."/>
            <person name="Fuhrmann J.L."/>
            <person name="Nguyen D."/>
            <person name="Utterback T.R."/>
            <person name="Kelley J.M."/>
            <person name="Peterson J.D."/>
            <person name="Sadow P.W."/>
            <person name="Hanna M.C."/>
            <person name="Cotton M.D."/>
            <person name="Roberts K.M."/>
            <person name="Hurst M.A."/>
            <person name="Kaine B.P."/>
            <person name="Borodovsky M."/>
            <person name="Klenk H.-P."/>
            <person name="Fraser C.M."/>
            <person name="Smith H.O."/>
            <person name="Woese C.R."/>
            <person name="Venter J.C."/>
        </authorList>
    </citation>
    <scope>NUCLEOTIDE SEQUENCE [LARGE SCALE GENOMIC DNA]</scope>
    <source>
        <strain>ATCC 43067 / DSM 2661 / JAL-1 / JCM 10045 / NBRC 100440</strain>
    </source>
</reference>
<dbReference type="EMBL" id="L77117">
    <property type="protein sequence ID" value="AAB99048.1"/>
    <property type="molecule type" value="Genomic_DNA"/>
</dbReference>
<dbReference type="PIR" id="C64430">
    <property type="entry name" value="C64430"/>
</dbReference>
<dbReference type="RefSeq" id="WP_010870557.1">
    <property type="nucleotide sequence ID" value="NC_000909.1"/>
</dbReference>
<dbReference type="PDB" id="3CPQ">
    <property type="method" value="X-ray"/>
    <property type="resolution" value="1.90 A"/>
    <property type="chains" value="A/B=1-110"/>
</dbReference>
<dbReference type="PDBsum" id="3CPQ"/>
<dbReference type="SMR" id="P54061"/>
<dbReference type="FunCoup" id="P54061">
    <property type="interactions" value="165"/>
</dbReference>
<dbReference type="STRING" id="243232.MJ_1044"/>
<dbReference type="PaxDb" id="243232-MJ_1044"/>
<dbReference type="EnsemblBacteria" id="AAB99048">
    <property type="protein sequence ID" value="AAB99048"/>
    <property type="gene ID" value="MJ_1044"/>
</dbReference>
<dbReference type="GeneID" id="1451941"/>
<dbReference type="KEGG" id="mja:MJ_1044"/>
<dbReference type="eggNOG" id="arCOG01752">
    <property type="taxonomic scope" value="Archaea"/>
</dbReference>
<dbReference type="HOGENOM" id="CLU_130502_1_0_2"/>
<dbReference type="InParanoid" id="P54061"/>
<dbReference type="OrthoDB" id="10759at2157"/>
<dbReference type="PhylomeDB" id="P54061"/>
<dbReference type="EvolutionaryTrace" id="P54061"/>
<dbReference type="Proteomes" id="UP000000805">
    <property type="component" value="Chromosome"/>
</dbReference>
<dbReference type="GO" id="GO:0022625">
    <property type="term" value="C:cytosolic large ribosomal subunit"/>
    <property type="evidence" value="ECO:0000318"/>
    <property type="project" value="GO_Central"/>
</dbReference>
<dbReference type="GO" id="GO:0003723">
    <property type="term" value="F:RNA binding"/>
    <property type="evidence" value="ECO:0000318"/>
    <property type="project" value="GO_Central"/>
</dbReference>
<dbReference type="GO" id="GO:0003735">
    <property type="term" value="F:structural constituent of ribosome"/>
    <property type="evidence" value="ECO:0000318"/>
    <property type="project" value="GO_Central"/>
</dbReference>
<dbReference type="GO" id="GO:0006412">
    <property type="term" value="P:translation"/>
    <property type="evidence" value="ECO:0007669"/>
    <property type="project" value="UniProtKB-UniRule"/>
</dbReference>
<dbReference type="FunFam" id="3.30.1330.30:FF:000053">
    <property type="entry name" value="50S ribosomal protein L30e"/>
    <property type="match status" value="1"/>
</dbReference>
<dbReference type="Gene3D" id="3.30.1330.30">
    <property type="match status" value="1"/>
</dbReference>
<dbReference type="HAMAP" id="MF_00481">
    <property type="entry name" value="Ribosomal_eL30"/>
    <property type="match status" value="1"/>
</dbReference>
<dbReference type="InterPro" id="IPR000231">
    <property type="entry name" value="Ribosomal_eL30"/>
</dbReference>
<dbReference type="InterPro" id="IPR039109">
    <property type="entry name" value="Ribosomal_eL30-like"/>
</dbReference>
<dbReference type="InterPro" id="IPR029064">
    <property type="entry name" value="Ribosomal_eL30-like_sf"/>
</dbReference>
<dbReference type="InterPro" id="IPR022991">
    <property type="entry name" value="Ribosomal_eL30_CS"/>
</dbReference>
<dbReference type="InterPro" id="IPR004038">
    <property type="entry name" value="Ribosomal_eL8/eL30/eS12/Gad45"/>
</dbReference>
<dbReference type="NCBIfam" id="NF002172">
    <property type="entry name" value="PRK01018.1"/>
    <property type="match status" value="1"/>
</dbReference>
<dbReference type="PANTHER" id="PTHR11449">
    <property type="entry name" value="RIBOSOMAL PROTEIN L30"/>
    <property type="match status" value="1"/>
</dbReference>
<dbReference type="Pfam" id="PF01248">
    <property type="entry name" value="Ribosomal_L7Ae"/>
    <property type="match status" value="1"/>
</dbReference>
<dbReference type="SUPFAM" id="SSF55315">
    <property type="entry name" value="L30e-like"/>
    <property type="match status" value="1"/>
</dbReference>
<dbReference type="PROSITE" id="PS00709">
    <property type="entry name" value="RIBOSOMAL_L30E_1"/>
    <property type="match status" value="1"/>
</dbReference>
<dbReference type="PROSITE" id="PS00993">
    <property type="entry name" value="RIBOSOMAL_L30E_2"/>
    <property type="match status" value="1"/>
</dbReference>
<sequence length="110" mass="12134">MRRRENMDVNKAIRTAVDTGKVILGSKRTIKFVKHGEGKLVVLAGNIPKDLEEDVKYYAKLSNIPVYQHKITSLELGAVCGKPFPVAALLVLDEGLSNIMELVEKKEGGE</sequence>
<feature type="chain" id="PRO_0000146147" description="Large ribosomal subunit protein eL30">
    <location>
        <begin position="1"/>
        <end position="110"/>
    </location>
</feature>
<feature type="helix" evidence="2">
    <location>
        <begin position="8"/>
        <end position="19"/>
    </location>
</feature>
<feature type="strand" evidence="2">
    <location>
        <begin position="20"/>
        <end position="25"/>
    </location>
</feature>
<feature type="helix" evidence="2">
    <location>
        <begin position="26"/>
        <end position="34"/>
    </location>
</feature>
<feature type="strand" evidence="2">
    <location>
        <begin position="39"/>
        <end position="43"/>
    </location>
</feature>
<feature type="helix" evidence="2">
    <location>
        <begin position="49"/>
        <end position="61"/>
    </location>
</feature>
<feature type="strand" evidence="2">
    <location>
        <begin position="66"/>
        <end position="68"/>
    </location>
</feature>
<feature type="helix" evidence="2">
    <location>
        <begin position="73"/>
        <end position="79"/>
    </location>
</feature>
<feature type="strand" evidence="2">
    <location>
        <begin position="87"/>
        <end position="93"/>
    </location>
</feature>
<feature type="helix" evidence="2">
    <location>
        <begin position="99"/>
        <end position="104"/>
    </location>
</feature>
<accession>P54061</accession>